<gene>
    <name evidence="1" type="primary">lexA</name>
    <name type="ordered locus">Lxx15880</name>
</gene>
<evidence type="ECO:0000255" key="1">
    <source>
        <dbReference type="HAMAP-Rule" id="MF_00015"/>
    </source>
</evidence>
<proteinExistence type="inferred from homology"/>
<feature type="chain" id="PRO_0000170048" description="LexA repressor">
    <location>
        <begin position="1"/>
        <end position="224"/>
    </location>
</feature>
<feature type="DNA-binding region" description="H-T-H motif" evidence="1">
    <location>
        <begin position="41"/>
        <end position="61"/>
    </location>
</feature>
<feature type="active site" description="For autocatalytic cleavage activity" evidence="1">
    <location>
        <position position="148"/>
    </location>
</feature>
<feature type="active site" description="For autocatalytic cleavage activity" evidence="1">
    <location>
        <position position="185"/>
    </location>
</feature>
<feature type="site" description="Cleavage; by autolysis" evidence="1">
    <location>
        <begin position="113"/>
        <end position="114"/>
    </location>
</feature>
<organism>
    <name type="scientific">Leifsonia xyli subsp. xyli (strain CTCB07)</name>
    <dbReference type="NCBI Taxonomy" id="281090"/>
    <lineage>
        <taxon>Bacteria</taxon>
        <taxon>Bacillati</taxon>
        <taxon>Actinomycetota</taxon>
        <taxon>Actinomycetes</taxon>
        <taxon>Micrococcales</taxon>
        <taxon>Microbacteriaceae</taxon>
        <taxon>Leifsonia</taxon>
    </lineage>
</organism>
<protein>
    <recommendedName>
        <fullName evidence="1">LexA repressor</fullName>
        <ecNumber evidence="1">3.4.21.88</ecNumber>
    </recommendedName>
</protein>
<reference key="1">
    <citation type="journal article" date="2004" name="Mol. Plant Microbe Interact.">
        <title>The genome sequence of the Gram-positive sugarcane pathogen Leifsonia xyli subsp. xyli.</title>
        <authorList>
            <person name="Monteiro-Vitorello C.B."/>
            <person name="Camargo L.E.A."/>
            <person name="Van Sluys M.A."/>
            <person name="Kitajima J.P."/>
            <person name="Truffi D."/>
            <person name="do Amaral A.M."/>
            <person name="Harakava R."/>
            <person name="de Oliveira J.C.F."/>
            <person name="Wood D."/>
            <person name="de Oliveira M.C."/>
            <person name="Miyaki C.Y."/>
            <person name="Takita M.A."/>
            <person name="da Silva A.C.R."/>
            <person name="Furlan L.R."/>
            <person name="Carraro D.M."/>
            <person name="Camarotte G."/>
            <person name="Almeida N.F. Jr."/>
            <person name="Carrer H."/>
            <person name="Coutinho L.L."/>
            <person name="El-Dorry H.A."/>
            <person name="Ferro M.I.T."/>
            <person name="Gagliardi P.R."/>
            <person name="Giglioti E."/>
            <person name="Goldman M.H.S."/>
            <person name="Goldman G.H."/>
            <person name="Kimura E.T."/>
            <person name="Ferro E.S."/>
            <person name="Kuramae E.E."/>
            <person name="Lemos E.G.M."/>
            <person name="Lemos M.V.F."/>
            <person name="Mauro S.M.Z."/>
            <person name="Machado M.A."/>
            <person name="Marino C.L."/>
            <person name="Menck C.F."/>
            <person name="Nunes L.R."/>
            <person name="Oliveira R.C."/>
            <person name="Pereira G.G."/>
            <person name="Siqueira W."/>
            <person name="de Souza A.A."/>
            <person name="Tsai S.M."/>
            <person name="Zanca A.S."/>
            <person name="Simpson A.J.G."/>
            <person name="Brumbley S.M."/>
            <person name="Setubal J.C."/>
        </authorList>
    </citation>
    <scope>NUCLEOTIDE SEQUENCE [LARGE SCALE GENOMIC DNA]</scope>
    <source>
        <strain>CTCB07</strain>
    </source>
</reference>
<dbReference type="EC" id="3.4.21.88" evidence="1"/>
<dbReference type="EMBL" id="AE016822">
    <property type="protein sequence ID" value="AAT89386.1"/>
    <property type="molecule type" value="Genomic_DNA"/>
</dbReference>
<dbReference type="RefSeq" id="WP_011186375.1">
    <property type="nucleotide sequence ID" value="NC_006087.1"/>
</dbReference>
<dbReference type="SMR" id="Q6AE10"/>
<dbReference type="STRING" id="281090.Lxx15880"/>
<dbReference type="MEROPS" id="S24.001"/>
<dbReference type="KEGG" id="lxx:Lxx15880"/>
<dbReference type="eggNOG" id="COG1974">
    <property type="taxonomic scope" value="Bacteria"/>
</dbReference>
<dbReference type="HOGENOM" id="CLU_066192_45_0_11"/>
<dbReference type="Proteomes" id="UP000001306">
    <property type="component" value="Chromosome"/>
</dbReference>
<dbReference type="GO" id="GO:0003677">
    <property type="term" value="F:DNA binding"/>
    <property type="evidence" value="ECO:0007669"/>
    <property type="project" value="UniProtKB-UniRule"/>
</dbReference>
<dbReference type="GO" id="GO:0004252">
    <property type="term" value="F:serine-type endopeptidase activity"/>
    <property type="evidence" value="ECO:0007669"/>
    <property type="project" value="UniProtKB-UniRule"/>
</dbReference>
<dbReference type="GO" id="GO:0006281">
    <property type="term" value="P:DNA repair"/>
    <property type="evidence" value="ECO:0007669"/>
    <property type="project" value="UniProtKB-UniRule"/>
</dbReference>
<dbReference type="GO" id="GO:0006260">
    <property type="term" value="P:DNA replication"/>
    <property type="evidence" value="ECO:0007669"/>
    <property type="project" value="UniProtKB-UniRule"/>
</dbReference>
<dbReference type="GO" id="GO:0045892">
    <property type="term" value="P:negative regulation of DNA-templated transcription"/>
    <property type="evidence" value="ECO:0007669"/>
    <property type="project" value="UniProtKB-UniRule"/>
</dbReference>
<dbReference type="GO" id="GO:0006508">
    <property type="term" value="P:proteolysis"/>
    <property type="evidence" value="ECO:0007669"/>
    <property type="project" value="InterPro"/>
</dbReference>
<dbReference type="GO" id="GO:0009432">
    <property type="term" value="P:SOS response"/>
    <property type="evidence" value="ECO:0007669"/>
    <property type="project" value="UniProtKB-UniRule"/>
</dbReference>
<dbReference type="CDD" id="cd06529">
    <property type="entry name" value="S24_LexA-like"/>
    <property type="match status" value="1"/>
</dbReference>
<dbReference type="FunFam" id="1.10.10.10:FF:000009">
    <property type="entry name" value="LexA repressor"/>
    <property type="match status" value="1"/>
</dbReference>
<dbReference type="FunFam" id="2.10.109.10:FF:000001">
    <property type="entry name" value="LexA repressor"/>
    <property type="match status" value="1"/>
</dbReference>
<dbReference type="Gene3D" id="2.10.109.10">
    <property type="entry name" value="Umud Fragment, subunit A"/>
    <property type="match status" value="1"/>
</dbReference>
<dbReference type="Gene3D" id="1.10.10.10">
    <property type="entry name" value="Winged helix-like DNA-binding domain superfamily/Winged helix DNA-binding domain"/>
    <property type="match status" value="1"/>
</dbReference>
<dbReference type="HAMAP" id="MF_00015">
    <property type="entry name" value="LexA"/>
    <property type="match status" value="1"/>
</dbReference>
<dbReference type="InterPro" id="IPR006200">
    <property type="entry name" value="LexA"/>
</dbReference>
<dbReference type="InterPro" id="IPR039418">
    <property type="entry name" value="LexA-like"/>
</dbReference>
<dbReference type="InterPro" id="IPR036286">
    <property type="entry name" value="LexA/Signal_pep-like_sf"/>
</dbReference>
<dbReference type="InterPro" id="IPR006199">
    <property type="entry name" value="LexA_DNA-bd_dom"/>
</dbReference>
<dbReference type="InterPro" id="IPR050077">
    <property type="entry name" value="LexA_repressor"/>
</dbReference>
<dbReference type="InterPro" id="IPR006197">
    <property type="entry name" value="Peptidase_S24_LexA"/>
</dbReference>
<dbReference type="InterPro" id="IPR015927">
    <property type="entry name" value="Peptidase_S24_S26A/B/C"/>
</dbReference>
<dbReference type="InterPro" id="IPR036388">
    <property type="entry name" value="WH-like_DNA-bd_sf"/>
</dbReference>
<dbReference type="InterPro" id="IPR036390">
    <property type="entry name" value="WH_DNA-bd_sf"/>
</dbReference>
<dbReference type="NCBIfam" id="TIGR00498">
    <property type="entry name" value="lexA"/>
    <property type="match status" value="1"/>
</dbReference>
<dbReference type="PANTHER" id="PTHR33516">
    <property type="entry name" value="LEXA REPRESSOR"/>
    <property type="match status" value="1"/>
</dbReference>
<dbReference type="PANTHER" id="PTHR33516:SF2">
    <property type="entry name" value="LEXA REPRESSOR-RELATED"/>
    <property type="match status" value="1"/>
</dbReference>
<dbReference type="Pfam" id="PF01726">
    <property type="entry name" value="LexA_DNA_bind"/>
    <property type="match status" value="1"/>
</dbReference>
<dbReference type="Pfam" id="PF00717">
    <property type="entry name" value="Peptidase_S24"/>
    <property type="match status" value="1"/>
</dbReference>
<dbReference type="PRINTS" id="PR00726">
    <property type="entry name" value="LEXASERPTASE"/>
</dbReference>
<dbReference type="SUPFAM" id="SSF51306">
    <property type="entry name" value="LexA/Signal peptidase"/>
    <property type="match status" value="1"/>
</dbReference>
<dbReference type="SUPFAM" id="SSF46785">
    <property type="entry name" value="Winged helix' DNA-binding domain"/>
    <property type="match status" value="1"/>
</dbReference>
<keyword id="KW-0068">Autocatalytic cleavage</keyword>
<keyword id="KW-0227">DNA damage</keyword>
<keyword id="KW-0234">DNA repair</keyword>
<keyword id="KW-0235">DNA replication</keyword>
<keyword id="KW-0238">DNA-binding</keyword>
<keyword id="KW-0378">Hydrolase</keyword>
<keyword id="KW-1185">Reference proteome</keyword>
<keyword id="KW-0678">Repressor</keyword>
<keyword id="KW-0742">SOS response</keyword>
<keyword id="KW-0804">Transcription</keyword>
<keyword id="KW-0805">Transcription regulation</keyword>
<name>LEXA_LEIXX</name>
<accession>Q6AE10</accession>
<sequence>MSNENQTPRGTRRRKNLSEKQLAILDVIQRSVSQRGYPPSMREIGDAVGLSSLSSVTHQLNQLELSGYLRRDPNRPRALEILIDLPSAAAPDFESQTPVGDAAMVPLVGRIAAGVPITAEQQVEEVFPLPRQLVGNGELFMLKVVGESMIDAAICDGDWVVVRAQNTAENGDIVAAMLDEEATVKVFRQRDGHTWLLPRNSNFEPILGDFSQILGKVVAVLRAV</sequence>
<comment type="function">
    <text evidence="1">Represses a number of genes involved in the response to DNA damage (SOS response), including recA and lexA. In the presence of single-stranded DNA, RecA interacts with LexA causing an autocatalytic cleavage which disrupts the DNA-binding part of LexA, leading to derepression of the SOS regulon and eventually DNA repair.</text>
</comment>
<comment type="catalytic activity">
    <reaction evidence="1">
        <text>Hydrolysis of Ala-|-Gly bond in repressor LexA.</text>
        <dbReference type="EC" id="3.4.21.88"/>
    </reaction>
</comment>
<comment type="subunit">
    <text evidence="1">Homodimer.</text>
</comment>
<comment type="similarity">
    <text evidence="1">Belongs to the peptidase S24 family.</text>
</comment>